<evidence type="ECO:0000255" key="1">
    <source>
        <dbReference type="HAMAP-Rule" id="MF_00366"/>
    </source>
</evidence>
<proteinExistence type="inferred from homology"/>
<protein>
    <recommendedName>
        <fullName evidence="1">DNA-directed RNA polymerase subunit omega</fullName>
        <shortName evidence="1">RNAP omega subunit</shortName>
        <ecNumber evidence="1">2.7.7.6</ecNumber>
    </recommendedName>
    <alternativeName>
        <fullName evidence="1">RNA polymerase omega subunit</fullName>
    </alternativeName>
    <alternativeName>
        <fullName evidence="1">Transcriptase subunit omega</fullName>
    </alternativeName>
</protein>
<feature type="chain" id="PRO_1000079642" description="DNA-directed RNA polymerase subunit omega">
    <location>
        <begin position="1"/>
        <end position="88"/>
    </location>
</feature>
<name>RPOZ_SALAI</name>
<accession>A8LY23</accession>
<comment type="function">
    <text evidence="1">Promotes RNA polymerase assembly. Latches the N- and C-terminal regions of the beta' subunit thereby facilitating its interaction with the beta and alpha subunits.</text>
</comment>
<comment type="catalytic activity">
    <reaction evidence="1">
        <text>RNA(n) + a ribonucleoside 5'-triphosphate = RNA(n+1) + diphosphate</text>
        <dbReference type="Rhea" id="RHEA:21248"/>
        <dbReference type="Rhea" id="RHEA-COMP:14527"/>
        <dbReference type="Rhea" id="RHEA-COMP:17342"/>
        <dbReference type="ChEBI" id="CHEBI:33019"/>
        <dbReference type="ChEBI" id="CHEBI:61557"/>
        <dbReference type="ChEBI" id="CHEBI:140395"/>
        <dbReference type="EC" id="2.7.7.6"/>
    </reaction>
</comment>
<comment type="subunit">
    <text evidence="1">The RNAP catalytic core consists of 2 alpha, 1 beta, 1 beta' and 1 omega subunit. When a sigma factor is associated with the core the holoenzyme is formed, which can initiate transcription.</text>
</comment>
<comment type="similarity">
    <text evidence="1">Belongs to the RNA polymerase subunit omega family.</text>
</comment>
<sequence length="88" mass="9546">MGTIATNPEGITNPPIDELLEKTTSKYALVIFAAKRARQVNAYYSQLGEGLLEYVGPLVETTPQEKPLSIAMREINGGLLTAEPTDQP</sequence>
<dbReference type="EC" id="2.7.7.6" evidence="1"/>
<dbReference type="EMBL" id="CP000850">
    <property type="protein sequence ID" value="ABV97740.1"/>
    <property type="molecule type" value="Genomic_DNA"/>
</dbReference>
<dbReference type="SMR" id="A8LY23"/>
<dbReference type="STRING" id="391037.Sare_1855"/>
<dbReference type="KEGG" id="saq:Sare_1855"/>
<dbReference type="PATRIC" id="fig|391037.6.peg.1883"/>
<dbReference type="eggNOG" id="COG1758">
    <property type="taxonomic scope" value="Bacteria"/>
</dbReference>
<dbReference type="HOGENOM" id="CLU_125406_1_1_11"/>
<dbReference type="OrthoDB" id="8481372at2"/>
<dbReference type="GO" id="GO:0000428">
    <property type="term" value="C:DNA-directed RNA polymerase complex"/>
    <property type="evidence" value="ECO:0007669"/>
    <property type="project" value="UniProtKB-KW"/>
</dbReference>
<dbReference type="GO" id="GO:0003677">
    <property type="term" value="F:DNA binding"/>
    <property type="evidence" value="ECO:0007669"/>
    <property type="project" value="UniProtKB-UniRule"/>
</dbReference>
<dbReference type="GO" id="GO:0003899">
    <property type="term" value="F:DNA-directed RNA polymerase activity"/>
    <property type="evidence" value="ECO:0007669"/>
    <property type="project" value="UniProtKB-UniRule"/>
</dbReference>
<dbReference type="GO" id="GO:0006351">
    <property type="term" value="P:DNA-templated transcription"/>
    <property type="evidence" value="ECO:0007669"/>
    <property type="project" value="UniProtKB-UniRule"/>
</dbReference>
<dbReference type="Gene3D" id="3.90.940.10">
    <property type="match status" value="1"/>
</dbReference>
<dbReference type="HAMAP" id="MF_00366">
    <property type="entry name" value="RNApol_bact_RpoZ"/>
    <property type="match status" value="1"/>
</dbReference>
<dbReference type="InterPro" id="IPR003716">
    <property type="entry name" value="DNA-dir_RNA_pol_omega"/>
</dbReference>
<dbReference type="InterPro" id="IPR006110">
    <property type="entry name" value="Pol_omega/Rpo6/RPB6"/>
</dbReference>
<dbReference type="InterPro" id="IPR036161">
    <property type="entry name" value="RPB6/omega-like_sf"/>
</dbReference>
<dbReference type="NCBIfam" id="TIGR00690">
    <property type="entry name" value="rpoZ"/>
    <property type="match status" value="1"/>
</dbReference>
<dbReference type="PANTHER" id="PTHR34476">
    <property type="entry name" value="DNA-DIRECTED RNA POLYMERASE SUBUNIT OMEGA"/>
    <property type="match status" value="1"/>
</dbReference>
<dbReference type="PANTHER" id="PTHR34476:SF1">
    <property type="entry name" value="DNA-DIRECTED RNA POLYMERASE SUBUNIT OMEGA"/>
    <property type="match status" value="1"/>
</dbReference>
<dbReference type="Pfam" id="PF01192">
    <property type="entry name" value="RNA_pol_Rpb6"/>
    <property type="match status" value="1"/>
</dbReference>
<dbReference type="SMART" id="SM01409">
    <property type="entry name" value="RNA_pol_Rpb6"/>
    <property type="match status" value="1"/>
</dbReference>
<dbReference type="SUPFAM" id="SSF63562">
    <property type="entry name" value="RPB6/omega subunit-like"/>
    <property type="match status" value="1"/>
</dbReference>
<reference key="1">
    <citation type="submission" date="2007-10" db="EMBL/GenBank/DDBJ databases">
        <title>Complete sequence of Salinispora arenicola CNS-205.</title>
        <authorList>
            <consortium name="US DOE Joint Genome Institute"/>
            <person name="Copeland A."/>
            <person name="Lucas S."/>
            <person name="Lapidus A."/>
            <person name="Barry K."/>
            <person name="Glavina del Rio T."/>
            <person name="Dalin E."/>
            <person name="Tice H."/>
            <person name="Pitluck S."/>
            <person name="Foster B."/>
            <person name="Schmutz J."/>
            <person name="Larimer F."/>
            <person name="Land M."/>
            <person name="Hauser L."/>
            <person name="Kyrpides N."/>
            <person name="Ivanova N."/>
            <person name="Jensen P.R."/>
            <person name="Moore B.S."/>
            <person name="Penn K."/>
            <person name="Jenkins C."/>
            <person name="Udwary D."/>
            <person name="Xiang L."/>
            <person name="Gontang E."/>
            <person name="Richardson P."/>
        </authorList>
    </citation>
    <scope>NUCLEOTIDE SEQUENCE [LARGE SCALE GENOMIC DNA]</scope>
    <source>
        <strain>CNS-205</strain>
    </source>
</reference>
<keyword id="KW-0240">DNA-directed RNA polymerase</keyword>
<keyword id="KW-0548">Nucleotidyltransferase</keyword>
<keyword id="KW-0804">Transcription</keyword>
<keyword id="KW-0808">Transferase</keyword>
<organism>
    <name type="scientific">Salinispora arenicola (strain CNS-205)</name>
    <dbReference type="NCBI Taxonomy" id="391037"/>
    <lineage>
        <taxon>Bacteria</taxon>
        <taxon>Bacillati</taxon>
        <taxon>Actinomycetota</taxon>
        <taxon>Actinomycetes</taxon>
        <taxon>Micromonosporales</taxon>
        <taxon>Micromonosporaceae</taxon>
        <taxon>Salinispora</taxon>
    </lineage>
</organism>
<gene>
    <name evidence="1" type="primary">rpoZ</name>
    <name type="ordered locus">Sare_1855</name>
</gene>